<dbReference type="EC" id="4.2.3.3" evidence="1"/>
<dbReference type="EMBL" id="CP000232">
    <property type="protein sequence ID" value="ABC19589.1"/>
    <property type="molecule type" value="Genomic_DNA"/>
</dbReference>
<dbReference type="RefSeq" id="YP_430132.1">
    <property type="nucleotide sequence ID" value="NC_007644.1"/>
</dbReference>
<dbReference type="SMR" id="Q2RJ00"/>
<dbReference type="STRING" id="264732.Moth_1275"/>
<dbReference type="EnsemblBacteria" id="ABC19589">
    <property type="protein sequence ID" value="ABC19589"/>
    <property type="gene ID" value="Moth_1275"/>
</dbReference>
<dbReference type="KEGG" id="mta:Moth_1275"/>
<dbReference type="PATRIC" id="fig|264732.11.peg.1368"/>
<dbReference type="eggNOG" id="COG1803">
    <property type="taxonomic scope" value="Bacteria"/>
</dbReference>
<dbReference type="HOGENOM" id="CLU_120420_1_0_9"/>
<dbReference type="OrthoDB" id="9787147at2"/>
<dbReference type="GO" id="GO:0005829">
    <property type="term" value="C:cytosol"/>
    <property type="evidence" value="ECO:0007669"/>
    <property type="project" value="TreeGrafter"/>
</dbReference>
<dbReference type="GO" id="GO:0008929">
    <property type="term" value="F:methylglyoxal synthase activity"/>
    <property type="evidence" value="ECO:0007669"/>
    <property type="project" value="UniProtKB-UniRule"/>
</dbReference>
<dbReference type="GO" id="GO:0019242">
    <property type="term" value="P:methylglyoxal biosynthetic process"/>
    <property type="evidence" value="ECO:0007669"/>
    <property type="project" value="UniProtKB-UniRule"/>
</dbReference>
<dbReference type="CDD" id="cd01422">
    <property type="entry name" value="MGS"/>
    <property type="match status" value="1"/>
</dbReference>
<dbReference type="Gene3D" id="3.40.50.1380">
    <property type="entry name" value="Methylglyoxal synthase-like domain"/>
    <property type="match status" value="1"/>
</dbReference>
<dbReference type="HAMAP" id="MF_00549">
    <property type="entry name" value="Methylglyoxal_synth"/>
    <property type="match status" value="1"/>
</dbReference>
<dbReference type="InterPro" id="IPR004363">
    <property type="entry name" value="Methylgl_synth"/>
</dbReference>
<dbReference type="InterPro" id="IPR018148">
    <property type="entry name" value="Methylglyoxal_synth_AS"/>
</dbReference>
<dbReference type="InterPro" id="IPR011607">
    <property type="entry name" value="MGS-like_dom"/>
</dbReference>
<dbReference type="InterPro" id="IPR036914">
    <property type="entry name" value="MGS-like_dom_sf"/>
</dbReference>
<dbReference type="NCBIfam" id="TIGR00160">
    <property type="entry name" value="MGSA"/>
    <property type="match status" value="1"/>
</dbReference>
<dbReference type="NCBIfam" id="NF003559">
    <property type="entry name" value="PRK05234.1"/>
    <property type="match status" value="1"/>
</dbReference>
<dbReference type="PANTHER" id="PTHR30492">
    <property type="entry name" value="METHYLGLYOXAL SYNTHASE"/>
    <property type="match status" value="1"/>
</dbReference>
<dbReference type="PANTHER" id="PTHR30492:SF0">
    <property type="entry name" value="METHYLGLYOXAL SYNTHASE"/>
    <property type="match status" value="1"/>
</dbReference>
<dbReference type="Pfam" id="PF02142">
    <property type="entry name" value="MGS"/>
    <property type="match status" value="1"/>
</dbReference>
<dbReference type="PIRSF" id="PIRSF006614">
    <property type="entry name" value="Methylglyox_syn"/>
    <property type="match status" value="1"/>
</dbReference>
<dbReference type="SMART" id="SM00851">
    <property type="entry name" value="MGS"/>
    <property type="match status" value="1"/>
</dbReference>
<dbReference type="SUPFAM" id="SSF52335">
    <property type="entry name" value="Methylglyoxal synthase-like"/>
    <property type="match status" value="1"/>
</dbReference>
<dbReference type="PROSITE" id="PS01335">
    <property type="entry name" value="METHYLGLYOXAL_SYNTH"/>
    <property type="match status" value="1"/>
</dbReference>
<dbReference type="PROSITE" id="PS51855">
    <property type="entry name" value="MGS"/>
    <property type="match status" value="1"/>
</dbReference>
<protein>
    <recommendedName>
        <fullName evidence="1">Methylglyoxal synthase</fullName>
        <shortName evidence="1">MGS</shortName>
        <ecNumber evidence="1">4.2.3.3</ecNumber>
    </recommendedName>
</protein>
<name>MGSA_MOOTA</name>
<proteinExistence type="inferred from homology"/>
<accession>Q2RJ00</accession>
<keyword id="KW-0456">Lyase</keyword>
<evidence type="ECO:0000255" key="1">
    <source>
        <dbReference type="HAMAP-Rule" id="MF_00549"/>
    </source>
</evidence>
<comment type="function">
    <text evidence="1">Catalyzes the formation of methylglyoxal from dihydroxyacetone phosphate.</text>
</comment>
<comment type="catalytic activity">
    <reaction evidence="1">
        <text>dihydroxyacetone phosphate = methylglyoxal + phosphate</text>
        <dbReference type="Rhea" id="RHEA:17937"/>
        <dbReference type="ChEBI" id="CHEBI:17158"/>
        <dbReference type="ChEBI" id="CHEBI:43474"/>
        <dbReference type="ChEBI" id="CHEBI:57642"/>
        <dbReference type="EC" id="4.2.3.3"/>
    </reaction>
</comment>
<comment type="similarity">
    <text evidence="1">Belongs to the methylglyoxal synthase family.</text>
</comment>
<sequence>MRIALIAHDRKKDDLVNFVDEHKELFAGHRLVATGTTGKRIMERTGLKVHRLMSGPLGGDQQMGSLVARGRLDLVIFLRDPLTPQPHEPDINALLRICDVHNVPAATNLATAAIFLRYMQDHPGNRQA</sequence>
<feature type="chain" id="PRO_1000017819" description="Methylglyoxal synthase">
    <location>
        <begin position="1"/>
        <end position="128"/>
    </location>
</feature>
<feature type="domain" description="MGS-like" evidence="1">
    <location>
        <begin position="1"/>
        <end position="128"/>
    </location>
</feature>
<feature type="active site" description="Proton donor/acceptor" evidence="1">
    <location>
        <position position="60"/>
    </location>
</feature>
<feature type="binding site" evidence="1">
    <location>
        <position position="8"/>
    </location>
    <ligand>
        <name>substrate</name>
    </ligand>
</feature>
<feature type="binding site" evidence="1">
    <location>
        <position position="12"/>
    </location>
    <ligand>
        <name>substrate</name>
    </ligand>
</feature>
<feature type="binding site" evidence="1">
    <location>
        <begin position="34"/>
        <end position="37"/>
    </location>
    <ligand>
        <name>substrate</name>
    </ligand>
</feature>
<feature type="binding site" evidence="1">
    <location>
        <begin position="54"/>
        <end position="55"/>
    </location>
    <ligand>
        <name>substrate</name>
    </ligand>
</feature>
<feature type="binding site" evidence="1">
    <location>
        <position position="87"/>
    </location>
    <ligand>
        <name>substrate</name>
    </ligand>
</feature>
<reference key="1">
    <citation type="journal article" date="2008" name="Environ. Microbiol.">
        <title>The complete genome sequence of Moorella thermoacetica (f. Clostridium thermoaceticum).</title>
        <authorList>
            <person name="Pierce E."/>
            <person name="Xie G."/>
            <person name="Barabote R.D."/>
            <person name="Saunders E."/>
            <person name="Han C.S."/>
            <person name="Detter J.C."/>
            <person name="Richardson P."/>
            <person name="Brettin T.S."/>
            <person name="Das A."/>
            <person name="Ljungdahl L.G."/>
            <person name="Ragsdale S.W."/>
        </authorList>
    </citation>
    <scope>NUCLEOTIDE SEQUENCE [LARGE SCALE GENOMIC DNA]</scope>
    <source>
        <strain>ATCC 39073 / JCM 9320</strain>
    </source>
</reference>
<organism>
    <name type="scientific">Moorella thermoacetica (strain ATCC 39073 / JCM 9320)</name>
    <dbReference type="NCBI Taxonomy" id="264732"/>
    <lineage>
        <taxon>Bacteria</taxon>
        <taxon>Bacillati</taxon>
        <taxon>Bacillota</taxon>
        <taxon>Clostridia</taxon>
        <taxon>Moorellales</taxon>
        <taxon>Moorellaceae</taxon>
        <taxon>Moorella</taxon>
    </lineage>
</organism>
<gene>
    <name evidence="1" type="primary">mgsA</name>
    <name type="ordered locus">Moth_1275</name>
</gene>